<organismHost>
    <name type="scientific">Aedes vexans</name>
    <name type="common">Inland floodwater mosquito</name>
    <name type="synonym">Culex vexans</name>
    <dbReference type="NCBI Taxonomy" id="7163"/>
</organismHost>
<organismHost>
    <name type="scientific">Culex territans</name>
    <dbReference type="NCBI Taxonomy" id="42431"/>
</organismHost>
<organismHost>
    <name type="scientific">Culiseta annulata</name>
    <dbReference type="NCBI Taxonomy" id="332058"/>
</organismHost>
<organismHost>
    <name type="scientific">Ochlerotatus sollicitans</name>
    <name type="common">eastern saltmarsh mosquito</name>
    <dbReference type="NCBI Taxonomy" id="310513"/>
</organismHost>
<organismHost>
    <name type="scientific">Ochlerotatus taeniorhynchus</name>
    <name type="common">Black salt marsh mosquito</name>
    <name type="synonym">Aedes taeniorhynchus</name>
    <dbReference type="NCBI Taxonomy" id="329105"/>
</organismHost>
<organismHost>
    <name type="scientific">Psorophora ferox</name>
    <dbReference type="NCBI Taxonomy" id="7183"/>
</organismHost>
<reference key="1">
    <citation type="journal article" date="2006" name="J. Virol.">
        <title>Genome of invertebrate iridescent virus type 3 (mosquito iridescent virus).</title>
        <authorList>
            <person name="Delhon G."/>
            <person name="Tulman E.R."/>
            <person name="Afonso C.L."/>
            <person name="Lu Z."/>
            <person name="Becnel J.J."/>
            <person name="Moser B.A."/>
            <person name="Kutish G.F."/>
            <person name="Rock D.L."/>
        </authorList>
    </citation>
    <scope>NUCLEOTIDE SEQUENCE [LARGE SCALE GENOMIC DNA]</scope>
</reference>
<dbReference type="EMBL" id="DQ643392">
    <property type="protein sequence ID" value="ABF82107.1"/>
    <property type="molecule type" value="Genomic_DNA"/>
</dbReference>
<dbReference type="RefSeq" id="YP_654649.1">
    <property type="nucleotide sequence ID" value="NC_008187.1"/>
</dbReference>
<dbReference type="KEGG" id="vg:4156288"/>
<dbReference type="OrthoDB" id="39571at10239"/>
<dbReference type="Proteomes" id="UP000001358">
    <property type="component" value="Genome"/>
</dbReference>
<feature type="chain" id="PRO_0000377805" description="Uncharacterized protein 077R">
    <location>
        <begin position="1"/>
        <end position="147"/>
    </location>
</feature>
<name>077R_IIV3</name>
<proteinExistence type="predicted"/>
<organism>
    <name type="scientific">Invertebrate iridescent virus 3</name>
    <name type="common">IIV-3</name>
    <name type="synonym">Mosquito iridescent virus</name>
    <dbReference type="NCBI Taxonomy" id="345201"/>
    <lineage>
        <taxon>Viruses</taxon>
        <taxon>Varidnaviria</taxon>
        <taxon>Bamfordvirae</taxon>
        <taxon>Nucleocytoviricota</taxon>
        <taxon>Megaviricetes</taxon>
        <taxon>Pimascovirales</taxon>
        <taxon>Iridoviridae</taxon>
        <taxon>Betairidovirinae</taxon>
        <taxon>Chloriridovirus</taxon>
    </lineage>
</organism>
<protein>
    <recommendedName>
        <fullName>Uncharacterized protein 077R</fullName>
    </recommendedName>
</protein>
<accession>Q196Y3</accession>
<gene>
    <name type="ORF">IIV3-077R</name>
</gene>
<sequence>MGWGFDLKVRVYDKIDKRKVFYMEANRYREARWKLVVNFPPKFLDATRYYCSVVWETCDDPNQCTLQVNDTCWGSTQWDAPEEYDPALEPLLTRLKSGEPLELVSYNRKRVNFYLTQTENVFWIRHSRVPWDWDIEADEPDVEIYYD</sequence>
<keyword id="KW-1185">Reference proteome</keyword>